<organism>
    <name type="scientific">Escherichia coli (strain K12)</name>
    <dbReference type="NCBI Taxonomy" id="83333"/>
    <lineage>
        <taxon>Bacteria</taxon>
        <taxon>Pseudomonadati</taxon>
        <taxon>Pseudomonadota</taxon>
        <taxon>Gammaproteobacteria</taxon>
        <taxon>Enterobacterales</taxon>
        <taxon>Enterobacteriaceae</taxon>
        <taxon>Escherichia</taxon>
    </lineage>
</organism>
<dbReference type="EMBL" id="U00096">
    <property type="protein sequence ID" value="AAC74161.1"/>
    <property type="molecule type" value="Genomic_DNA"/>
</dbReference>
<dbReference type="EMBL" id="AP009048">
    <property type="protein sequence ID" value="BAA35886.1"/>
    <property type="molecule type" value="Genomic_DNA"/>
</dbReference>
<dbReference type="PIR" id="B64851">
    <property type="entry name" value="B64851"/>
</dbReference>
<dbReference type="RefSeq" id="NP_415595.1">
    <property type="nucleotide sequence ID" value="NC_000913.3"/>
</dbReference>
<dbReference type="RefSeq" id="WP_000349316.1">
    <property type="nucleotide sequence ID" value="NZ_STEB01000016.1"/>
</dbReference>
<dbReference type="SMR" id="P75938"/>
<dbReference type="BioGRID" id="4261897">
    <property type="interactions" value="8"/>
</dbReference>
<dbReference type="BioGRID" id="850011">
    <property type="interactions" value="1"/>
</dbReference>
<dbReference type="ComplexPortal" id="CPX-5887">
    <property type="entry name" value="Flagellar basal-body rod complex"/>
</dbReference>
<dbReference type="FunCoup" id="P75938">
    <property type="interactions" value="57"/>
</dbReference>
<dbReference type="IntAct" id="P75938">
    <property type="interactions" value="8"/>
</dbReference>
<dbReference type="STRING" id="511145.b1077"/>
<dbReference type="PaxDb" id="511145-b1077"/>
<dbReference type="EnsemblBacteria" id="AAC74161">
    <property type="protein sequence ID" value="AAC74161"/>
    <property type="gene ID" value="b1077"/>
</dbReference>
<dbReference type="GeneID" id="945639"/>
<dbReference type="KEGG" id="ecj:JW1064"/>
<dbReference type="KEGG" id="eco:b1077"/>
<dbReference type="KEGG" id="ecoc:C3026_06530"/>
<dbReference type="PATRIC" id="fig|1411691.4.peg.1191"/>
<dbReference type="EchoBASE" id="EB4018"/>
<dbReference type="eggNOG" id="COG4787">
    <property type="taxonomic scope" value="Bacteria"/>
</dbReference>
<dbReference type="HOGENOM" id="CLU_013687_1_0_6"/>
<dbReference type="InParanoid" id="P75938"/>
<dbReference type="OMA" id="HQDDMNA"/>
<dbReference type="OrthoDB" id="9804559at2"/>
<dbReference type="PhylomeDB" id="P75938"/>
<dbReference type="BioCyc" id="EcoCyc:FLGF-FLAGELLAR-MOTOR-ROD-PROTEIN"/>
<dbReference type="PRO" id="PR:P75938"/>
<dbReference type="Proteomes" id="UP000000625">
    <property type="component" value="Chromosome"/>
</dbReference>
<dbReference type="GO" id="GO:0009288">
    <property type="term" value="C:bacterial-type flagellum"/>
    <property type="evidence" value="ECO:0000315"/>
    <property type="project" value="EcoCyc"/>
</dbReference>
<dbReference type="GO" id="GO:0030694">
    <property type="term" value="C:bacterial-type flagellum basal body, rod"/>
    <property type="evidence" value="ECO:0000304"/>
    <property type="project" value="EcoCyc"/>
</dbReference>
<dbReference type="GO" id="GO:0071973">
    <property type="term" value="P:bacterial-type flagellum-dependent cell motility"/>
    <property type="evidence" value="ECO:0000315"/>
    <property type="project" value="EcoCyc"/>
</dbReference>
<dbReference type="GO" id="GO:0071978">
    <property type="term" value="P:bacterial-type flagellum-dependent swarming motility"/>
    <property type="evidence" value="ECO:0000318"/>
    <property type="project" value="GO_Central"/>
</dbReference>
<dbReference type="GO" id="GO:0006935">
    <property type="term" value="P:chemotaxis"/>
    <property type="evidence" value="ECO:0000303"/>
    <property type="project" value="ComplexPortal"/>
</dbReference>
<dbReference type="InterPro" id="IPR001444">
    <property type="entry name" value="Flag_bb_rod_N"/>
</dbReference>
<dbReference type="InterPro" id="IPR019776">
    <property type="entry name" value="Flagellar_basal_body_rod_CS"/>
</dbReference>
<dbReference type="InterPro" id="IPR020013">
    <property type="entry name" value="Flagellar_FlgE/F/G"/>
</dbReference>
<dbReference type="InterPro" id="IPR010930">
    <property type="entry name" value="Flg_bb/hook_C_dom"/>
</dbReference>
<dbReference type="InterPro" id="IPR037925">
    <property type="entry name" value="FlgE/F/G-like"/>
</dbReference>
<dbReference type="InterPro" id="IPR053967">
    <property type="entry name" value="LlgE_F_G-like_D1"/>
</dbReference>
<dbReference type="NCBIfam" id="TIGR03506">
    <property type="entry name" value="FlgEFG_subfam"/>
    <property type="match status" value="1"/>
</dbReference>
<dbReference type="NCBIfam" id="NF009280">
    <property type="entry name" value="PRK12640.1"/>
    <property type="match status" value="1"/>
</dbReference>
<dbReference type="PANTHER" id="PTHR30435:SF18">
    <property type="entry name" value="FLAGELLAR BASAL-BODY ROD PROTEIN FLGF"/>
    <property type="match status" value="1"/>
</dbReference>
<dbReference type="PANTHER" id="PTHR30435">
    <property type="entry name" value="FLAGELLAR PROTEIN"/>
    <property type="match status" value="1"/>
</dbReference>
<dbReference type="Pfam" id="PF00460">
    <property type="entry name" value="Flg_bb_rod"/>
    <property type="match status" value="1"/>
</dbReference>
<dbReference type="Pfam" id="PF06429">
    <property type="entry name" value="Flg_bbr_C"/>
    <property type="match status" value="1"/>
</dbReference>
<dbReference type="Pfam" id="PF22692">
    <property type="entry name" value="LlgE_F_G_D1"/>
    <property type="match status" value="1"/>
</dbReference>
<dbReference type="SUPFAM" id="SSF117143">
    <property type="entry name" value="Flagellar hook protein flgE"/>
    <property type="match status" value="1"/>
</dbReference>
<dbReference type="PROSITE" id="PS00588">
    <property type="entry name" value="FLAGELLA_BB_ROD"/>
    <property type="match status" value="1"/>
</dbReference>
<comment type="subunit">
    <text>The basal body constitutes a major portion of the flagellar organelle and consists of five rings (E,L,P,S, and M) mounted on a central rod. The rod consists of about 26 subunits of FlgG in the distal portion, and FlgB, FlgC and FlgF are thought to build up the proximal portion of the rod with about 6 subunits each.</text>
</comment>
<comment type="subcellular location">
    <subcellularLocation>
        <location>Bacterial flagellum basal body</location>
    </subcellularLocation>
</comment>
<comment type="similarity">
    <text evidence="1">Belongs to the flagella basal body rod proteins family.</text>
</comment>
<proteinExistence type="inferred from homology"/>
<name>FLGF_ECOLI</name>
<gene>
    <name type="primary">flgF</name>
    <name type="synonym">fla FVI</name>
    <name type="synonym">flaX</name>
    <name type="ordered locus">b1077</name>
    <name type="ordered locus">JW1064</name>
</gene>
<feature type="chain" id="PRO_0000180838" description="Flagellar basal-body rod protein FlgF">
    <location>
        <begin position="1"/>
        <end position="251"/>
    </location>
</feature>
<protein>
    <recommendedName>
        <fullName>Flagellar basal-body rod protein FlgF</fullName>
    </recommendedName>
    <alternativeName>
        <fullName>Putative proximal rod protein</fullName>
    </alternativeName>
</protein>
<reference key="1">
    <citation type="journal article" date="1996" name="DNA Res.">
        <title>A 718-kb DNA sequence of the Escherichia coli K-12 genome corresponding to the 12.7-28.0 min region on the linkage map.</title>
        <authorList>
            <person name="Oshima T."/>
            <person name="Aiba H."/>
            <person name="Baba T."/>
            <person name="Fujita K."/>
            <person name="Hayashi K."/>
            <person name="Honjo A."/>
            <person name="Ikemoto K."/>
            <person name="Inada T."/>
            <person name="Itoh T."/>
            <person name="Kajihara M."/>
            <person name="Kanai K."/>
            <person name="Kashimoto K."/>
            <person name="Kimura S."/>
            <person name="Kitagawa M."/>
            <person name="Makino K."/>
            <person name="Masuda S."/>
            <person name="Miki T."/>
            <person name="Mizobuchi K."/>
            <person name="Mori H."/>
            <person name="Motomura K."/>
            <person name="Nakamura Y."/>
            <person name="Nashimoto H."/>
            <person name="Nishio Y."/>
            <person name="Saito N."/>
            <person name="Sampei G."/>
            <person name="Seki Y."/>
            <person name="Tagami H."/>
            <person name="Takemoto K."/>
            <person name="Wada C."/>
            <person name="Yamamoto Y."/>
            <person name="Yano M."/>
            <person name="Horiuchi T."/>
        </authorList>
    </citation>
    <scope>NUCLEOTIDE SEQUENCE [LARGE SCALE GENOMIC DNA]</scope>
    <source>
        <strain>K12 / W3110 / ATCC 27325 / DSM 5911</strain>
    </source>
</reference>
<reference key="2">
    <citation type="journal article" date="1997" name="Science">
        <title>The complete genome sequence of Escherichia coli K-12.</title>
        <authorList>
            <person name="Blattner F.R."/>
            <person name="Plunkett G. III"/>
            <person name="Bloch C.A."/>
            <person name="Perna N.T."/>
            <person name="Burland V."/>
            <person name="Riley M."/>
            <person name="Collado-Vides J."/>
            <person name="Glasner J.D."/>
            <person name="Rode C.K."/>
            <person name="Mayhew G.F."/>
            <person name="Gregor J."/>
            <person name="Davis N.W."/>
            <person name="Kirkpatrick H.A."/>
            <person name="Goeden M.A."/>
            <person name="Rose D.J."/>
            <person name="Mau B."/>
            <person name="Shao Y."/>
        </authorList>
    </citation>
    <scope>NUCLEOTIDE SEQUENCE [LARGE SCALE GENOMIC DNA]</scope>
    <source>
        <strain>K12 / MG1655 / ATCC 47076</strain>
    </source>
</reference>
<reference key="3">
    <citation type="journal article" date="2006" name="Mol. Syst. Biol.">
        <title>Highly accurate genome sequences of Escherichia coli K-12 strains MG1655 and W3110.</title>
        <authorList>
            <person name="Hayashi K."/>
            <person name="Morooka N."/>
            <person name="Yamamoto Y."/>
            <person name="Fujita K."/>
            <person name="Isono K."/>
            <person name="Choi S."/>
            <person name="Ohtsubo E."/>
            <person name="Baba T."/>
            <person name="Wanner B.L."/>
            <person name="Mori H."/>
            <person name="Horiuchi T."/>
        </authorList>
    </citation>
    <scope>NUCLEOTIDE SEQUENCE [LARGE SCALE GENOMIC DNA]</scope>
    <source>
        <strain>K12 / W3110 / ATCC 27325 / DSM 5911</strain>
    </source>
</reference>
<accession>P75938</accession>
<evidence type="ECO:0000305" key="1"/>
<keyword id="KW-0975">Bacterial flagellum</keyword>
<keyword id="KW-1185">Reference proteome</keyword>
<sequence>MDHAIYTAMGAASQTLNQQAVTASNLANASTPGFRAQLNALRAVPVEGLSLPTRTLVTASTPGADMTPGKMDYTSRPLDVALQQDGWLAVQTADGSEGYTRNGSIQVDPTGQLTIQGHPVIGEAGPIAVPEGAEITIAADGTISALNPGDPANTVAPVGRLKLVKATGSEVQRGDDGIFRLSAETQATRGPVLQADPTLRVMSGVLEGSNVNAVAAMSDMIASARRFEMQMKVISSVDDNAGRANQLLSMS</sequence>